<proteinExistence type="inferred from homology"/>
<evidence type="ECO:0000255" key="1">
    <source>
        <dbReference type="HAMAP-Rule" id="MF_00156"/>
    </source>
</evidence>
<comment type="function">
    <text evidence="1">Catalyzes the reversible reaction in which hydroxymethyl group from 5,10-methylenetetrahydrofolate is transferred onto alpha-ketoisovalerate to form ketopantoate.</text>
</comment>
<comment type="catalytic activity">
    <reaction evidence="1">
        <text>3-methyl-2-oxobutanoate + (6R)-5,10-methylene-5,6,7,8-tetrahydrofolate + H2O = 2-dehydropantoate + (6S)-5,6,7,8-tetrahydrofolate</text>
        <dbReference type="Rhea" id="RHEA:11824"/>
        <dbReference type="ChEBI" id="CHEBI:11561"/>
        <dbReference type="ChEBI" id="CHEBI:11851"/>
        <dbReference type="ChEBI" id="CHEBI:15377"/>
        <dbReference type="ChEBI" id="CHEBI:15636"/>
        <dbReference type="ChEBI" id="CHEBI:57453"/>
        <dbReference type="EC" id="2.1.2.11"/>
    </reaction>
</comment>
<comment type="cofactor">
    <cofactor evidence="1">
        <name>Mg(2+)</name>
        <dbReference type="ChEBI" id="CHEBI:18420"/>
    </cofactor>
    <text evidence="1">Binds 1 Mg(2+) ion per subunit.</text>
</comment>
<comment type="pathway">
    <text evidence="1">Cofactor biosynthesis; (R)-pantothenate biosynthesis; (R)-pantoate from 3-methyl-2-oxobutanoate: step 1/2.</text>
</comment>
<comment type="subunit">
    <text evidence="1">Homodecamer; pentamer of dimers.</text>
</comment>
<comment type="subcellular location">
    <subcellularLocation>
        <location evidence="1">Cytoplasm</location>
    </subcellularLocation>
</comment>
<comment type="similarity">
    <text evidence="1">Belongs to the PanB family.</text>
</comment>
<reference key="1">
    <citation type="journal article" date="2005" name="Nucleic Acids Res.">
        <title>Genome dynamics and diversity of Shigella species, the etiologic agents of bacillary dysentery.</title>
        <authorList>
            <person name="Yang F."/>
            <person name="Yang J."/>
            <person name="Zhang X."/>
            <person name="Chen L."/>
            <person name="Jiang Y."/>
            <person name="Yan Y."/>
            <person name="Tang X."/>
            <person name="Wang J."/>
            <person name="Xiong Z."/>
            <person name="Dong J."/>
            <person name="Xue Y."/>
            <person name="Zhu Y."/>
            <person name="Xu X."/>
            <person name="Sun L."/>
            <person name="Chen S."/>
            <person name="Nie H."/>
            <person name="Peng J."/>
            <person name="Xu J."/>
            <person name="Wang Y."/>
            <person name="Yuan Z."/>
            <person name="Wen Y."/>
            <person name="Yao Z."/>
            <person name="Shen Y."/>
            <person name="Qiang B."/>
            <person name="Hou Y."/>
            <person name="Yu J."/>
            <person name="Jin Q."/>
        </authorList>
    </citation>
    <scope>NUCLEOTIDE SEQUENCE [LARGE SCALE GENOMIC DNA]</scope>
    <source>
        <strain>Ss046</strain>
    </source>
</reference>
<organism>
    <name type="scientific">Shigella sonnei (strain Ss046)</name>
    <dbReference type="NCBI Taxonomy" id="300269"/>
    <lineage>
        <taxon>Bacteria</taxon>
        <taxon>Pseudomonadati</taxon>
        <taxon>Pseudomonadota</taxon>
        <taxon>Gammaproteobacteria</taxon>
        <taxon>Enterobacterales</taxon>
        <taxon>Enterobacteriaceae</taxon>
        <taxon>Shigella</taxon>
    </lineage>
</organism>
<feature type="chain" id="PRO_0000297378" description="3-methyl-2-oxobutanoate hydroxymethyltransferase">
    <location>
        <begin position="1"/>
        <end position="264"/>
    </location>
</feature>
<feature type="active site" description="Proton acceptor" evidence="1">
    <location>
        <position position="181"/>
    </location>
</feature>
<feature type="binding site" evidence="1">
    <location>
        <begin position="45"/>
        <end position="46"/>
    </location>
    <ligand>
        <name>3-methyl-2-oxobutanoate</name>
        <dbReference type="ChEBI" id="CHEBI:11851"/>
    </ligand>
</feature>
<feature type="binding site" evidence="1">
    <location>
        <position position="45"/>
    </location>
    <ligand>
        <name>Mg(2+)</name>
        <dbReference type="ChEBI" id="CHEBI:18420"/>
    </ligand>
</feature>
<feature type="binding site" evidence="1">
    <location>
        <position position="84"/>
    </location>
    <ligand>
        <name>3-methyl-2-oxobutanoate</name>
        <dbReference type="ChEBI" id="CHEBI:11851"/>
    </ligand>
</feature>
<feature type="binding site" evidence="1">
    <location>
        <position position="84"/>
    </location>
    <ligand>
        <name>Mg(2+)</name>
        <dbReference type="ChEBI" id="CHEBI:18420"/>
    </ligand>
</feature>
<feature type="binding site" evidence="1">
    <location>
        <position position="112"/>
    </location>
    <ligand>
        <name>3-methyl-2-oxobutanoate</name>
        <dbReference type="ChEBI" id="CHEBI:11851"/>
    </ligand>
</feature>
<feature type="binding site" evidence="1">
    <location>
        <position position="114"/>
    </location>
    <ligand>
        <name>Mg(2+)</name>
        <dbReference type="ChEBI" id="CHEBI:18420"/>
    </ligand>
</feature>
<protein>
    <recommendedName>
        <fullName evidence="1">3-methyl-2-oxobutanoate hydroxymethyltransferase</fullName>
        <ecNumber evidence="1">2.1.2.11</ecNumber>
    </recommendedName>
    <alternativeName>
        <fullName evidence="1">Ketopantoate hydroxymethyltransferase</fullName>
        <shortName evidence="1">KPHMT</shortName>
    </alternativeName>
</protein>
<dbReference type="EC" id="2.1.2.11" evidence="1"/>
<dbReference type="EMBL" id="CP000038">
    <property type="protein sequence ID" value="AAZ86936.1"/>
    <property type="molecule type" value="Genomic_DNA"/>
</dbReference>
<dbReference type="RefSeq" id="WP_000805450.1">
    <property type="nucleotide sequence ID" value="NC_007384.1"/>
</dbReference>
<dbReference type="SMR" id="Q3Z5M6"/>
<dbReference type="GeneID" id="93777302"/>
<dbReference type="KEGG" id="ssn:SSON_0142"/>
<dbReference type="HOGENOM" id="CLU_036645_1_0_6"/>
<dbReference type="UniPathway" id="UPA00028">
    <property type="reaction ID" value="UER00003"/>
</dbReference>
<dbReference type="Proteomes" id="UP000002529">
    <property type="component" value="Chromosome"/>
</dbReference>
<dbReference type="GO" id="GO:0005737">
    <property type="term" value="C:cytoplasm"/>
    <property type="evidence" value="ECO:0007669"/>
    <property type="project" value="UniProtKB-SubCell"/>
</dbReference>
<dbReference type="GO" id="GO:0003864">
    <property type="term" value="F:3-methyl-2-oxobutanoate hydroxymethyltransferase activity"/>
    <property type="evidence" value="ECO:0007669"/>
    <property type="project" value="UniProtKB-UniRule"/>
</dbReference>
<dbReference type="GO" id="GO:0000287">
    <property type="term" value="F:magnesium ion binding"/>
    <property type="evidence" value="ECO:0007669"/>
    <property type="project" value="TreeGrafter"/>
</dbReference>
<dbReference type="GO" id="GO:0015940">
    <property type="term" value="P:pantothenate biosynthetic process"/>
    <property type="evidence" value="ECO:0007669"/>
    <property type="project" value="UniProtKB-UniRule"/>
</dbReference>
<dbReference type="CDD" id="cd06557">
    <property type="entry name" value="KPHMT-like"/>
    <property type="match status" value="1"/>
</dbReference>
<dbReference type="FunFam" id="3.20.20.60:FF:000003">
    <property type="entry name" value="3-methyl-2-oxobutanoate hydroxymethyltransferase"/>
    <property type="match status" value="1"/>
</dbReference>
<dbReference type="Gene3D" id="3.20.20.60">
    <property type="entry name" value="Phosphoenolpyruvate-binding domains"/>
    <property type="match status" value="1"/>
</dbReference>
<dbReference type="HAMAP" id="MF_00156">
    <property type="entry name" value="PanB"/>
    <property type="match status" value="1"/>
</dbReference>
<dbReference type="InterPro" id="IPR003700">
    <property type="entry name" value="Pantoate_hydroxy_MeTrfase"/>
</dbReference>
<dbReference type="InterPro" id="IPR015813">
    <property type="entry name" value="Pyrv/PenolPyrv_kinase-like_dom"/>
</dbReference>
<dbReference type="InterPro" id="IPR040442">
    <property type="entry name" value="Pyrv_kinase-like_dom_sf"/>
</dbReference>
<dbReference type="NCBIfam" id="TIGR00222">
    <property type="entry name" value="panB"/>
    <property type="match status" value="1"/>
</dbReference>
<dbReference type="NCBIfam" id="NF001452">
    <property type="entry name" value="PRK00311.1"/>
    <property type="match status" value="1"/>
</dbReference>
<dbReference type="PANTHER" id="PTHR20881">
    <property type="entry name" value="3-METHYL-2-OXOBUTANOATE HYDROXYMETHYLTRANSFERASE"/>
    <property type="match status" value="1"/>
</dbReference>
<dbReference type="PANTHER" id="PTHR20881:SF0">
    <property type="entry name" value="3-METHYL-2-OXOBUTANOATE HYDROXYMETHYLTRANSFERASE"/>
    <property type="match status" value="1"/>
</dbReference>
<dbReference type="Pfam" id="PF02548">
    <property type="entry name" value="Pantoate_transf"/>
    <property type="match status" value="1"/>
</dbReference>
<dbReference type="PIRSF" id="PIRSF000388">
    <property type="entry name" value="Pantoate_hydroxy_MeTrfase"/>
    <property type="match status" value="1"/>
</dbReference>
<dbReference type="SUPFAM" id="SSF51621">
    <property type="entry name" value="Phosphoenolpyruvate/pyruvate domain"/>
    <property type="match status" value="1"/>
</dbReference>
<gene>
    <name evidence="1" type="primary">panB</name>
    <name type="ordered locus">SSON_0142</name>
</gene>
<name>PANB_SHISS</name>
<keyword id="KW-0963">Cytoplasm</keyword>
<keyword id="KW-0460">Magnesium</keyword>
<keyword id="KW-0479">Metal-binding</keyword>
<keyword id="KW-0566">Pantothenate biosynthesis</keyword>
<keyword id="KW-1185">Reference proteome</keyword>
<keyword id="KW-0808">Transferase</keyword>
<sequence length="264" mass="28151">MKPTTIASLQKCKQDKKRFATITAYDYSFAKLFADEGLNVMLVGDSLGMTVQGHDSTLPVTVADIAYHTASVRRGAPNCLLLADLPFMAYATPEQAFENAATVMRAGANMVKIEGGEWLVETVKMLTERAVPVCGHLGLTPQSVNIFGGYKVQGRGDEAGDQLLSDALALEAAGAQLLVLECVPIELAKRITEALAIPVIGIGAGNVTDGQILVMHDAFGITGGHIPKFAKNFLAETGDIRAAVRQYMAEVESGVYPGEEHSFH</sequence>
<accession>Q3Z5M6</accession>